<gene>
    <name type="primary">yfcE</name>
    <name type="ordered locus">Z3562</name>
    <name type="ordered locus">ECs3184</name>
</gene>
<sequence>MMKLMFASDIHGSLPATERVLELFAQSGAQWLVILGDVLNHGPRNALPEGYAPAKVAERLNEVAHKVIAVRGNCDSEVDQMLLHFPITAPWQQVLLEKQRLFLTHGHLFGPENLPALNQNDVLVYGHTHLPVAEQRGEIFHFNPGSVSIPKGGNPASYGMLDNDVLSVIALNDQSIIAQVAINP</sequence>
<feature type="chain" id="PRO_0000155606" description="Phosphodiesterase YfcE">
    <location>
        <begin position="1"/>
        <end position="184"/>
    </location>
</feature>
<feature type="binding site" evidence="1">
    <location>
        <position position="9"/>
    </location>
    <ligand>
        <name>Mn(2+)</name>
        <dbReference type="ChEBI" id="CHEBI:29035"/>
        <label>1</label>
    </ligand>
</feature>
<feature type="binding site" evidence="1">
    <location>
        <position position="11"/>
    </location>
    <ligand>
        <name>Mn(2+)</name>
        <dbReference type="ChEBI" id="CHEBI:29035"/>
        <label>1</label>
    </ligand>
</feature>
<feature type="binding site" evidence="1">
    <location>
        <position position="37"/>
    </location>
    <ligand>
        <name>Mn(2+)</name>
        <dbReference type="ChEBI" id="CHEBI:29035"/>
        <label>1</label>
    </ligand>
</feature>
<feature type="binding site" evidence="1">
    <location>
        <position position="37"/>
    </location>
    <ligand>
        <name>Mn(2+)</name>
        <dbReference type="ChEBI" id="CHEBI:29035"/>
        <label>2</label>
    </ligand>
</feature>
<feature type="binding site" evidence="1">
    <location>
        <position position="73"/>
    </location>
    <ligand>
        <name>Mn(2+)</name>
        <dbReference type="ChEBI" id="CHEBI:29035"/>
        <label>2</label>
    </ligand>
</feature>
<feature type="binding site" evidence="1">
    <location>
        <position position="105"/>
    </location>
    <ligand>
        <name>Mn(2+)</name>
        <dbReference type="ChEBI" id="CHEBI:29035"/>
        <label>2</label>
    </ligand>
</feature>
<feature type="binding site" evidence="1">
    <location>
        <position position="127"/>
    </location>
    <ligand>
        <name>Mn(2+)</name>
        <dbReference type="ChEBI" id="CHEBI:29035"/>
        <label>2</label>
    </ligand>
</feature>
<feature type="binding site" evidence="1">
    <location>
        <position position="129"/>
    </location>
    <ligand>
        <name>Mn(2+)</name>
        <dbReference type="ChEBI" id="CHEBI:29035"/>
        <label>1</label>
    </ligand>
</feature>
<organism>
    <name type="scientific">Escherichia coli O157:H7</name>
    <dbReference type="NCBI Taxonomy" id="83334"/>
    <lineage>
        <taxon>Bacteria</taxon>
        <taxon>Pseudomonadati</taxon>
        <taxon>Pseudomonadota</taxon>
        <taxon>Gammaproteobacteria</taxon>
        <taxon>Enterobacterales</taxon>
        <taxon>Enterobacteriaceae</taxon>
        <taxon>Escherichia</taxon>
    </lineage>
</organism>
<evidence type="ECO:0000250" key="1">
    <source>
        <dbReference type="UniProtKB" id="P67095"/>
    </source>
</evidence>
<evidence type="ECO:0000305" key="2"/>
<keyword id="KW-0378">Hydrolase</keyword>
<keyword id="KW-0464">Manganese</keyword>
<keyword id="KW-0479">Metal-binding</keyword>
<keyword id="KW-1185">Reference proteome</keyword>
<protein>
    <recommendedName>
        <fullName evidence="1">Phosphodiesterase YfcE</fullName>
        <ecNumber evidence="1">3.1.4.-</ecNumber>
    </recommendedName>
</protein>
<proteinExistence type="inferred from homology"/>
<name>YFCE_ECO57</name>
<accession>P67097</accession>
<accession>P76495</accession>
<comment type="function">
    <text evidence="1">Shows phosphodiesterase activity.</text>
</comment>
<comment type="cofactor">
    <cofactor evidence="1">
        <name>Mn(2+)</name>
        <dbReference type="ChEBI" id="CHEBI:29035"/>
    </cofactor>
    <text evidence="1">Binds 2 manganese ions per subunit.</text>
</comment>
<comment type="similarity">
    <text evidence="2">Belongs to the metallophosphoesterase superfamily. YfcE family.</text>
</comment>
<comment type="sequence caution" evidence="2">
    <conflict type="erroneous initiation">
        <sequence resource="EMBL-CDS" id="BAB36607"/>
    </conflict>
    <text>Truncated N-terminus.</text>
</comment>
<reference key="1">
    <citation type="journal article" date="2001" name="Nature">
        <title>Genome sequence of enterohaemorrhagic Escherichia coli O157:H7.</title>
        <authorList>
            <person name="Perna N.T."/>
            <person name="Plunkett G. III"/>
            <person name="Burland V."/>
            <person name="Mau B."/>
            <person name="Glasner J.D."/>
            <person name="Rose D.J."/>
            <person name="Mayhew G.F."/>
            <person name="Evans P.S."/>
            <person name="Gregor J."/>
            <person name="Kirkpatrick H.A."/>
            <person name="Posfai G."/>
            <person name="Hackett J."/>
            <person name="Klink S."/>
            <person name="Boutin A."/>
            <person name="Shao Y."/>
            <person name="Miller L."/>
            <person name="Grotbeck E.J."/>
            <person name="Davis N.W."/>
            <person name="Lim A."/>
            <person name="Dimalanta E.T."/>
            <person name="Potamousis K."/>
            <person name="Apodaca J."/>
            <person name="Anantharaman T.S."/>
            <person name="Lin J."/>
            <person name="Yen G."/>
            <person name="Schwartz D.C."/>
            <person name="Welch R.A."/>
            <person name="Blattner F.R."/>
        </authorList>
    </citation>
    <scope>NUCLEOTIDE SEQUENCE [LARGE SCALE GENOMIC DNA]</scope>
    <source>
        <strain>O157:H7 / EDL933 / ATCC 700927 / EHEC</strain>
    </source>
</reference>
<reference key="2">
    <citation type="journal article" date="2001" name="DNA Res.">
        <title>Complete genome sequence of enterohemorrhagic Escherichia coli O157:H7 and genomic comparison with a laboratory strain K-12.</title>
        <authorList>
            <person name="Hayashi T."/>
            <person name="Makino K."/>
            <person name="Ohnishi M."/>
            <person name="Kurokawa K."/>
            <person name="Ishii K."/>
            <person name="Yokoyama K."/>
            <person name="Han C.-G."/>
            <person name="Ohtsubo E."/>
            <person name="Nakayama K."/>
            <person name="Murata T."/>
            <person name="Tanaka M."/>
            <person name="Tobe T."/>
            <person name="Iida T."/>
            <person name="Takami H."/>
            <person name="Honda T."/>
            <person name="Sasakawa C."/>
            <person name="Ogasawara N."/>
            <person name="Yasunaga T."/>
            <person name="Kuhara S."/>
            <person name="Shiba T."/>
            <person name="Hattori M."/>
            <person name="Shinagawa H."/>
        </authorList>
    </citation>
    <scope>NUCLEOTIDE SEQUENCE [LARGE SCALE GENOMIC DNA]</scope>
    <source>
        <strain>O157:H7 / Sakai / RIMD 0509952 / EHEC</strain>
    </source>
</reference>
<dbReference type="EC" id="3.1.4.-" evidence="1"/>
<dbReference type="EMBL" id="AE005174">
    <property type="protein sequence ID" value="AAG57429.1"/>
    <property type="molecule type" value="Genomic_DNA"/>
</dbReference>
<dbReference type="EMBL" id="BA000007">
    <property type="protein sequence ID" value="BAB36607.2"/>
    <property type="status" value="ALT_INIT"/>
    <property type="molecule type" value="Genomic_DNA"/>
</dbReference>
<dbReference type="PIR" id="A85871">
    <property type="entry name" value="A85871"/>
</dbReference>
<dbReference type="PIR" id="H91026">
    <property type="entry name" value="H91026"/>
</dbReference>
<dbReference type="RefSeq" id="NP_311211.3">
    <property type="nucleotide sequence ID" value="NC_002695.1"/>
</dbReference>
<dbReference type="SMR" id="P67097"/>
<dbReference type="STRING" id="155864.Z3562"/>
<dbReference type="GeneID" id="916892"/>
<dbReference type="KEGG" id="ece:Z3562"/>
<dbReference type="KEGG" id="ecs:ECs_3184"/>
<dbReference type="PATRIC" id="fig|386585.9.peg.3324"/>
<dbReference type="eggNOG" id="COG0622">
    <property type="taxonomic scope" value="Bacteria"/>
</dbReference>
<dbReference type="HOGENOM" id="CLU_063749_1_1_6"/>
<dbReference type="OMA" id="MKLFFAS"/>
<dbReference type="Proteomes" id="UP000000558">
    <property type="component" value="Chromosome"/>
</dbReference>
<dbReference type="Proteomes" id="UP000002519">
    <property type="component" value="Chromosome"/>
</dbReference>
<dbReference type="GO" id="GO:0016787">
    <property type="term" value="F:hydrolase activity"/>
    <property type="evidence" value="ECO:0007669"/>
    <property type="project" value="UniProtKB-KW"/>
</dbReference>
<dbReference type="GO" id="GO:0046872">
    <property type="term" value="F:metal ion binding"/>
    <property type="evidence" value="ECO:0007669"/>
    <property type="project" value="UniProtKB-KW"/>
</dbReference>
<dbReference type="CDD" id="cd00841">
    <property type="entry name" value="MPP_YfcE"/>
    <property type="match status" value="1"/>
</dbReference>
<dbReference type="FunFam" id="3.60.21.10:FF:000018">
    <property type="entry name" value="Phosphoesterase"/>
    <property type="match status" value="1"/>
</dbReference>
<dbReference type="Gene3D" id="3.60.21.10">
    <property type="match status" value="1"/>
</dbReference>
<dbReference type="InterPro" id="IPR024654">
    <property type="entry name" value="Calcineurin-like_PHP_lpxH"/>
</dbReference>
<dbReference type="InterPro" id="IPR029052">
    <property type="entry name" value="Metallo-depent_PP-like"/>
</dbReference>
<dbReference type="InterPro" id="IPR041802">
    <property type="entry name" value="MPP_YfcE"/>
</dbReference>
<dbReference type="InterPro" id="IPR020935">
    <property type="entry name" value="PdiEstase_YfcE_CS"/>
</dbReference>
<dbReference type="InterPro" id="IPR000979">
    <property type="entry name" value="Phosphodiesterase_MJ0936/Vps29"/>
</dbReference>
<dbReference type="NCBIfam" id="NF006988">
    <property type="entry name" value="PRK09453.1"/>
    <property type="match status" value="1"/>
</dbReference>
<dbReference type="NCBIfam" id="TIGR00040">
    <property type="entry name" value="yfcE"/>
    <property type="match status" value="1"/>
</dbReference>
<dbReference type="PANTHER" id="PTHR11124">
    <property type="entry name" value="VACUOLAR SORTING PROTEIN VPS29"/>
    <property type="match status" value="1"/>
</dbReference>
<dbReference type="Pfam" id="PF12850">
    <property type="entry name" value="Metallophos_2"/>
    <property type="match status" value="1"/>
</dbReference>
<dbReference type="SUPFAM" id="SSF56300">
    <property type="entry name" value="Metallo-dependent phosphatases"/>
    <property type="match status" value="1"/>
</dbReference>
<dbReference type="PROSITE" id="PS01269">
    <property type="entry name" value="UPF0025"/>
    <property type="match status" value="1"/>
</dbReference>